<keyword id="KW-0963">Cytoplasm</keyword>
<keyword id="KW-0448">Lipopolysaccharide biosynthesis</keyword>
<keyword id="KW-0548">Nucleotidyltransferase</keyword>
<keyword id="KW-0808">Transferase</keyword>
<proteinExistence type="inferred from homology"/>
<gene>
    <name evidence="1" type="primary">kdsB</name>
    <name type="ordered locus">A1G_02975</name>
</gene>
<feature type="chain" id="PRO_0000370143" description="3-deoxy-manno-octulosonate cytidylyltransferase">
    <location>
        <begin position="1"/>
        <end position="241"/>
    </location>
</feature>
<sequence length="241" mass="26854">MAIIIPSRLSSTRLKQKPLQLIGSITLIERVFKQVNQAGLEHTYVATDSEEIASVITKVGGKVIFTDSAIPTGTDRTYEAFKLIPNNQNINYIVNVQGDMPFIEPSSILKIIEYLKNSKYDIVTPIVKVDRESVKASSNVTVVVDSAGTALYFSRSLIPNGAEEFLYHVGMYGFRKNALEKFVSLKPTFLEKTERLEQLRALENGMTIGTCLVENVPISVDTEEDLKKAVKFYENISKLGL</sequence>
<organism>
    <name type="scientific">Rickettsia rickettsii (strain Sheila Smith)</name>
    <dbReference type="NCBI Taxonomy" id="392021"/>
    <lineage>
        <taxon>Bacteria</taxon>
        <taxon>Pseudomonadati</taxon>
        <taxon>Pseudomonadota</taxon>
        <taxon>Alphaproteobacteria</taxon>
        <taxon>Rickettsiales</taxon>
        <taxon>Rickettsiaceae</taxon>
        <taxon>Rickettsieae</taxon>
        <taxon>Rickettsia</taxon>
        <taxon>spotted fever group</taxon>
    </lineage>
</organism>
<dbReference type="EC" id="2.7.7.38" evidence="1"/>
<dbReference type="EMBL" id="CP000848">
    <property type="protein sequence ID" value="ABV76132.1"/>
    <property type="molecule type" value="Genomic_DNA"/>
</dbReference>
<dbReference type="SMR" id="A8GRV7"/>
<dbReference type="KEGG" id="rri:A1G_02975"/>
<dbReference type="HOGENOM" id="CLU_065038_0_1_5"/>
<dbReference type="UniPathway" id="UPA00030"/>
<dbReference type="UniPathway" id="UPA00358">
    <property type="reaction ID" value="UER00476"/>
</dbReference>
<dbReference type="Proteomes" id="UP000006832">
    <property type="component" value="Chromosome"/>
</dbReference>
<dbReference type="GO" id="GO:0005829">
    <property type="term" value="C:cytosol"/>
    <property type="evidence" value="ECO:0007669"/>
    <property type="project" value="TreeGrafter"/>
</dbReference>
<dbReference type="GO" id="GO:0008690">
    <property type="term" value="F:3-deoxy-manno-octulosonate cytidylyltransferase activity"/>
    <property type="evidence" value="ECO:0007669"/>
    <property type="project" value="UniProtKB-UniRule"/>
</dbReference>
<dbReference type="GO" id="GO:0033468">
    <property type="term" value="P:CMP-keto-3-deoxy-D-manno-octulosonic acid biosynthetic process"/>
    <property type="evidence" value="ECO:0007669"/>
    <property type="project" value="UniProtKB-UniRule"/>
</dbReference>
<dbReference type="GO" id="GO:0009103">
    <property type="term" value="P:lipopolysaccharide biosynthetic process"/>
    <property type="evidence" value="ECO:0007669"/>
    <property type="project" value="UniProtKB-UniRule"/>
</dbReference>
<dbReference type="CDD" id="cd02517">
    <property type="entry name" value="CMP-KDO-Synthetase"/>
    <property type="match status" value="1"/>
</dbReference>
<dbReference type="Gene3D" id="3.90.550.10">
    <property type="entry name" value="Spore Coat Polysaccharide Biosynthesis Protein SpsA, Chain A"/>
    <property type="match status" value="1"/>
</dbReference>
<dbReference type="HAMAP" id="MF_00057">
    <property type="entry name" value="KdsB"/>
    <property type="match status" value="1"/>
</dbReference>
<dbReference type="InterPro" id="IPR003329">
    <property type="entry name" value="Cytidylyl_trans"/>
</dbReference>
<dbReference type="InterPro" id="IPR004528">
    <property type="entry name" value="KdsB"/>
</dbReference>
<dbReference type="InterPro" id="IPR029044">
    <property type="entry name" value="Nucleotide-diphossugar_trans"/>
</dbReference>
<dbReference type="NCBIfam" id="TIGR00466">
    <property type="entry name" value="kdsB"/>
    <property type="match status" value="1"/>
</dbReference>
<dbReference type="NCBIfam" id="NF003948">
    <property type="entry name" value="PRK05450.1-1"/>
    <property type="match status" value="1"/>
</dbReference>
<dbReference type="NCBIfam" id="NF003952">
    <property type="entry name" value="PRK05450.1-5"/>
    <property type="match status" value="1"/>
</dbReference>
<dbReference type="PANTHER" id="PTHR42866">
    <property type="entry name" value="3-DEOXY-MANNO-OCTULOSONATE CYTIDYLYLTRANSFERASE"/>
    <property type="match status" value="1"/>
</dbReference>
<dbReference type="PANTHER" id="PTHR42866:SF2">
    <property type="entry name" value="3-DEOXY-MANNO-OCTULOSONATE CYTIDYLYLTRANSFERASE, MITOCHONDRIAL"/>
    <property type="match status" value="1"/>
</dbReference>
<dbReference type="Pfam" id="PF02348">
    <property type="entry name" value="CTP_transf_3"/>
    <property type="match status" value="1"/>
</dbReference>
<dbReference type="SUPFAM" id="SSF53448">
    <property type="entry name" value="Nucleotide-diphospho-sugar transferases"/>
    <property type="match status" value="1"/>
</dbReference>
<comment type="function">
    <text evidence="1">Activates KDO (a required 8-carbon sugar) for incorporation into bacterial lipopolysaccharide in Gram-negative bacteria.</text>
</comment>
<comment type="catalytic activity">
    <reaction evidence="1">
        <text>3-deoxy-alpha-D-manno-oct-2-ulosonate + CTP = CMP-3-deoxy-beta-D-manno-octulosonate + diphosphate</text>
        <dbReference type="Rhea" id="RHEA:23448"/>
        <dbReference type="ChEBI" id="CHEBI:33019"/>
        <dbReference type="ChEBI" id="CHEBI:37563"/>
        <dbReference type="ChEBI" id="CHEBI:85986"/>
        <dbReference type="ChEBI" id="CHEBI:85987"/>
        <dbReference type="EC" id="2.7.7.38"/>
    </reaction>
</comment>
<comment type="pathway">
    <text evidence="1">Nucleotide-sugar biosynthesis; CMP-3-deoxy-D-manno-octulosonate biosynthesis; CMP-3-deoxy-D-manno-octulosonate from 3-deoxy-D-manno-octulosonate and CTP: step 1/1.</text>
</comment>
<comment type="pathway">
    <text evidence="1">Bacterial outer membrane biogenesis; lipopolysaccharide biosynthesis.</text>
</comment>
<comment type="subcellular location">
    <subcellularLocation>
        <location evidence="1">Cytoplasm</location>
    </subcellularLocation>
</comment>
<comment type="similarity">
    <text evidence="1">Belongs to the KdsB family.</text>
</comment>
<protein>
    <recommendedName>
        <fullName evidence="1">3-deoxy-manno-octulosonate cytidylyltransferase</fullName>
        <ecNumber evidence="1">2.7.7.38</ecNumber>
    </recommendedName>
    <alternativeName>
        <fullName evidence="1">CMP-2-keto-3-deoxyoctulosonic acid synthase</fullName>
        <shortName evidence="1">CKS</shortName>
        <shortName evidence="1">CMP-KDO synthase</shortName>
    </alternativeName>
</protein>
<reference key="1">
    <citation type="submission" date="2007-09" db="EMBL/GenBank/DDBJ databases">
        <title>Complete genome sequence of Rickettsia rickettsii.</title>
        <authorList>
            <person name="Madan A."/>
            <person name="Fahey J."/>
            <person name="Helton E."/>
            <person name="Ketteman M."/>
            <person name="Madan A."/>
            <person name="Rodrigues S."/>
            <person name="Sanchez A."/>
            <person name="Dasch G."/>
            <person name="Eremeeva M."/>
        </authorList>
    </citation>
    <scope>NUCLEOTIDE SEQUENCE [LARGE SCALE GENOMIC DNA]</scope>
    <source>
        <strain>Sheila Smith</strain>
    </source>
</reference>
<accession>A8GRV7</accession>
<evidence type="ECO:0000255" key="1">
    <source>
        <dbReference type="HAMAP-Rule" id="MF_00057"/>
    </source>
</evidence>
<name>KDSB_RICRS</name>